<sequence length="14" mass="1618">LRLKSIVSYAKKVL</sequence>
<evidence type="ECO:0000250" key="1">
    <source>
        <dbReference type="UniProtKB" id="P21654"/>
    </source>
</evidence>
<evidence type="ECO:0000269" key="2">
    <source>
    </source>
</evidence>
<evidence type="ECO:0000303" key="3">
    <source>
    </source>
</evidence>
<evidence type="ECO:0000305" key="4"/>
<evidence type="ECO:0000305" key="5">
    <source>
    </source>
</evidence>
<organism>
    <name type="scientific">Sphodromantis viridis</name>
    <name type="common">Giant African praying mantis</name>
    <dbReference type="NCBI Taxonomy" id="267111"/>
    <lineage>
        <taxon>Eukaryota</taxon>
        <taxon>Metazoa</taxon>
        <taxon>Ecdysozoa</taxon>
        <taxon>Arthropoda</taxon>
        <taxon>Hexapoda</taxon>
        <taxon>Insecta</taxon>
        <taxon>Pterygota</taxon>
        <taxon>Neoptera</taxon>
        <taxon>Polyneoptera</taxon>
        <taxon>Dictyoptera</taxon>
        <taxon>Mantodea</taxon>
        <taxon>Eumantodea</taxon>
        <taxon>Mantoidea</taxon>
        <taxon>Mantidae</taxon>
        <taxon>Tenoderinae</taxon>
        <taxon>Paramantini</taxon>
        <taxon>Sphodromantis</taxon>
    </lineage>
</organism>
<keyword id="KW-0027">Amidation</keyword>
<keyword id="KW-0044">Antibiotic</keyword>
<keyword id="KW-0929">Antimicrobial</keyword>
<keyword id="KW-0903">Direct protein sequencing</keyword>
<keyword id="KW-0295">Fungicide</keyword>
<keyword id="KW-0391">Immunity</keyword>
<keyword id="KW-0399">Innate immunity</keyword>
<keyword id="KW-0472">Membrane</keyword>
<keyword id="KW-0964">Secreted</keyword>
<keyword id="KW-1052">Target cell membrane</keyword>
<keyword id="KW-1053">Target membrane</keyword>
<protein>
    <recommendedName>
        <fullName evidence="3">Mastoparan-S</fullName>
    </recommendedName>
</protein>
<reference key="1">
    <citation type="journal article" date="2015" name="Biochemistry (Mosc.)">
        <title>Identification and biochemical characterization of a new antibacterial and antifungal peptide derived from the insect Sphodromantis viridis.</title>
        <authorList>
            <person name="Zare-Zardini H."/>
            <person name="Taheri-Kafrani A."/>
            <person name="Ordooei M."/>
            <person name="Ebrahimi L."/>
            <person name="Tolueinia B."/>
            <person name="Soleimanizadeh M."/>
        </authorList>
    </citation>
    <scope>PROTEIN SEQUENCE</scope>
    <scope>FUNCTION</scope>
    <scope>MASS SPECTROMETRY</scope>
    <source>
        <tissue>Hemolymph</tissue>
    </source>
</reference>
<proteinExistence type="evidence at protein level"/>
<dbReference type="GO" id="GO:0005576">
    <property type="term" value="C:extracellular region"/>
    <property type="evidence" value="ECO:0007669"/>
    <property type="project" value="UniProtKB-SubCell"/>
</dbReference>
<dbReference type="GO" id="GO:0016020">
    <property type="term" value="C:membrane"/>
    <property type="evidence" value="ECO:0007669"/>
    <property type="project" value="UniProtKB-KW"/>
</dbReference>
<dbReference type="GO" id="GO:0044218">
    <property type="term" value="C:other organism cell membrane"/>
    <property type="evidence" value="ECO:0007669"/>
    <property type="project" value="UniProtKB-KW"/>
</dbReference>
<dbReference type="GO" id="GO:0042742">
    <property type="term" value="P:defense response to bacterium"/>
    <property type="evidence" value="ECO:0007669"/>
    <property type="project" value="UniProtKB-KW"/>
</dbReference>
<dbReference type="GO" id="GO:0050832">
    <property type="term" value="P:defense response to fungus"/>
    <property type="evidence" value="ECO:0007669"/>
    <property type="project" value="UniProtKB-KW"/>
</dbReference>
<dbReference type="GO" id="GO:0045087">
    <property type="term" value="P:innate immune response"/>
    <property type="evidence" value="ECO:0007669"/>
    <property type="project" value="UniProtKB-KW"/>
</dbReference>
<dbReference type="GO" id="GO:0031640">
    <property type="term" value="P:killing of cells of another organism"/>
    <property type="evidence" value="ECO:0007669"/>
    <property type="project" value="UniProtKB-KW"/>
</dbReference>
<feature type="peptide" id="PRO_0000458816" description="Mastoparan-S" evidence="2">
    <location>
        <begin position="1"/>
        <end position="14"/>
    </location>
</feature>
<feature type="modified residue" description="Leucine amide" evidence="1">
    <location>
        <position position="14"/>
    </location>
</feature>
<name>MAST_SPHVI</name>
<comment type="function">
    <text evidence="2">Antimicrobial peptide with a broad antimicrobial activity against Gram-negative and Gram-positive bacteria, as well as against fungi (MIC=15.1-28.3 ug/ml for bacterial and 19.3-24.6 ug/ml for fungal pathogens). Shows low hemolytic activity against human erythrocytes. In vitro, shows significant cytotoxicity on HeLa cells.</text>
</comment>
<comment type="subcellular location">
    <subcellularLocation>
        <location evidence="1 5">Secreted</location>
    </subcellularLocation>
    <subcellularLocation>
        <location evidence="1">Target cell membrane</location>
    </subcellularLocation>
    <text evidence="1">Assumes an amphipathic alpha-helical conformation in a membrane-like environment.</text>
</comment>
<comment type="tissue specificity">
    <text evidence="5">May be secreted in hemolymph.</text>
</comment>
<comment type="mass spectrometry" mass="1618.03" method="MALDI" evidence="2"/>
<comment type="miscellaneous">
    <text evidence="5">Is the only mastoparan described so far that does not belong to the order of Hymenoptera.</text>
</comment>
<comment type="similarity">
    <text evidence="4">Belongs to the MCD family. Mastoparan subfamily.</text>
</comment>
<accession>P0DX39</accession>